<protein>
    <recommendedName>
        <fullName evidence="1">Large ribosomal subunit protein uL2</fullName>
    </recommendedName>
    <alternativeName>
        <fullName evidence="3">50S ribosomal protein L2</fullName>
    </alternativeName>
</protein>
<feature type="chain" id="PRO_1000141628" description="Large ribosomal subunit protein uL2">
    <location>
        <begin position="1"/>
        <end position="274"/>
    </location>
</feature>
<feature type="region of interest" description="Disordered" evidence="2">
    <location>
        <begin position="222"/>
        <end position="274"/>
    </location>
</feature>
<feature type="compositionally biased region" description="Basic and acidic residues" evidence="2">
    <location>
        <begin position="229"/>
        <end position="239"/>
    </location>
</feature>
<dbReference type="EMBL" id="CP001185">
    <property type="protein sequence ID" value="ACJ75663.1"/>
    <property type="molecule type" value="Genomic_DNA"/>
</dbReference>
<dbReference type="RefSeq" id="WP_012580081.1">
    <property type="nucleotide sequence ID" value="NC_011653.1"/>
</dbReference>
<dbReference type="SMR" id="B7IHU9"/>
<dbReference type="STRING" id="484019.THA_1218"/>
<dbReference type="KEGG" id="taf:THA_1218"/>
<dbReference type="eggNOG" id="COG0090">
    <property type="taxonomic scope" value="Bacteria"/>
</dbReference>
<dbReference type="HOGENOM" id="CLU_036235_2_1_0"/>
<dbReference type="OrthoDB" id="9778722at2"/>
<dbReference type="Proteomes" id="UP000002453">
    <property type="component" value="Chromosome"/>
</dbReference>
<dbReference type="GO" id="GO:0015934">
    <property type="term" value="C:large ribosomal subunit"/>
    <property type="evidence" value="ECO:0007669"/>
    <property type="project" value="InterPro"/>
</dbReference>
<dbReference type="GO" id="GO:0019843">
    <property type="term" value="F:rRNA binding"/>
    <property type="evidence" value="ECO:0007669"/>
    <property type="project" value="UniProtKB-UniRule"/>
</dbReference>
<dbReference type="GO" id="GO:0003735">
    <property type="term" value="F:structural constituent of ribosome"/>
    <property type="evidence" value="ECO:0007669"/>
    <property type="project" value="InterPro"/>
</dbReference>
<dbReference type="GO" id="GO:0016740">
    <property type="term" value="F:transferase activity"/>
    <property type="evidence" value="ECO:0007669"/>
    <property type="project" value="InterPro"/>
</dbReference>
<dbReference type="GO" id="GO:0002181">
    <property type="term" value="P:cytoplasmic translation"/>
    <property type="evidence" value="ECO:0007669"/>
    <property type="project" value="TreeGrafter"/>
</dbReference>
<dbReference type="FunFam" id="2.30.30.30:FF:000001">
    <property type="entry name" value="50S ribosomal protein L2"/>
    <property type="match status" value="1"/>
</dbReference>
<dbReference type="FunFam" id="2.40.50.140:FF:000003">
    <property type="entry name" value="50S ribosomal protein L2"/>
    <property type="match status" value="1"/>
</dbReference>
<dbReference type="FunFam" id="4.10.950.10:FF:000001">
    <property type="entry name" value="50S ribosomal protein L2"/>
    <property type="match status" value="1"/>
</dbReference>
<dbReference type="Gene3D" id="2.30.30.30">
    <property type="match status" value="1"/>
</dbReference>
<dbReference type="Gene3D" id="2.40.50.140">
    <property type="entry name" value="Nucleic acid-binding proteins"/>
    <property type="match status" value="1"/>
</dbReference>
<dbReference type="Gene3D" id="4.10.950.10">
    <property type="entry name" value="Ribosomal protein L2, domain 3"/>
    <property type="match status" value="1"/>
</dbReference>
<dbReference type="HAMAP" id="MF_01320_B">
    <property type="entry name" value="Ribosomal_uL2_B"/>
    <property type="match status" value="1"/>
</dbReference>
<dbReference type="InterPro" id="IPR012340">
    <property type="entry name" value="NA-bd_OB-fold"/>
</dbReference>
<dbReference type="InterPro" id="IPR014722">
    <property type="entry name" value="Rib_uL2_dom2"/>
</dbReference>
<dbReference type="InterPro" id="IPR002171">
    <property type="entry name" value="Ribosomal_uL2"/>
</dbReference>
<dbReference type="InterPro" id="IPR005880">
    <property type="entry name" value="Ribosomal_uL2_bac/org-type"/>
</dbReference>
<dbReference type="InterPro" id="IPR022669">
    <property type="entry name" value="Ribosomal_uL2_C"/>
</dbReference>
<dbReference type="InterPro" id="IPR022671">
    <property type="entry name" value="Ribosomal_uL2_CS"/>
</dbReference>
<dbReference type="InterPro" id="IPR014726">
    <property type="entry name" value="Ribosomal_uL2_dom3"/>
</dbReference>
<dbReference type="InterPro" id="IPR022666">
    <property type="entry name" value="Ribosomal_uL2_RNA-bd_dom"/>
</dbReference>
<dbReference type="InterPro" id="IPR008991">
    <property type="entry name" value="Translation_prot_SH3-like_sf"/>
</dbReference>
<dbReference type="NCBIfam" id="TIGR01171">
    <property type="entry name" value="rplB_bact"/>
    <property type="match status" value="1"/>
</dbReference>
<dbReference type="PANTHER" id="PTHR13691:SF5">
    <property type="entry name" value="LARGE RIBOSOMAL SUBUNIT PROTEIN UL2M"/>
    <property type="match status" value="1"/>
</dbReference>
<dbReference type="PANTHER" id="PTHR13691">
    <property type="entry name" value="RIBOSOMAL PROTEIN L2"/>
    <property type="match status" value="1"/>
</dbReference>
<dbReference type="Pfam" id="PF00181">
    <property type="entry name" value="Ribosomal_L2"/>
    <property type="match status" value="1"/>
</dbReference>
<dbReference type="Pfam" id="PF03947">
    <property type="entry name" value="Ribosomal_L2_C"/>
    <property type="match status" value="1"/>
</dbReference>
<dbReference type="PIRSF" id="PIRSF002158">
    <property type="entry name" value="Ribosomal_L2"/>
    <property type="match status" value="1"/>
</dbReference>
<dbReference type="SMART" id="SM01383">
    <property type="entry name" value="Ribosomal_L2"/>
    <property type="match status" value="1"/>
</dbReference>
<dbReference type="SMART" id="SM01382">
    <property type="entry name" value="Ribosomal_L2_C"/>
    <property type="match status" value="1"/>
</dbReference>
<dbReference type="SUPFAM" id="SSF50249">
    <property type="entry name" value="Nucleic acid-binding proteins"/>
    <property type="match status" value="1"/>
</dbReference>
<dbReference type="SUPFAM" id="SSF50104">
    <property type="entry name" value="Translation proteins SH3-like domain"/>
    <property type="match status" value="1"/>
</dbReference>
<dbReference type="PROSITE" id="PS00467">
    <property type="entry name" value="RIBOSOMAL_L2"/>
    <property type="match status" value="1"/>
</dbReference>
<accession>B7IHU9</accession>
<organism>
    <name type="scientific">Thermosipho africanus (strain TCF52B)</name>
    <dbReference type="NCBI Taxonomy" id="484019"/>
    <lineage>
        <taxon>Bacteria</taxon>
        <taxon>Thermotogati</taxon>
        <taxon>Thermotogota</taxon>
        <taxon>Thermotogae</taxon>
        <taxon>Thermotogales</taxon>
        <taxon>Fervidobacteriaceae</taxon>
        <taxon>Thermosipho</taxon>
    </lineage>
</organism>
<name>RL2_THEAB</name>
<evidence type="ECO:0000255" key="1">
    <source>
        <dbReference type="HAMAP-Rule" id="MF_01320"/>
    </source>
</evidence>
<evidence type="ECO:0000256" key="2">
    <source>
        <dbReference type="SAM" id="MobiDB-lite"/>
    </source>
</evidence>
<evidence type="ECO:0000305" key="3"/>
<reference key="1">
    <citation type="journal article" date="2009" name="J. Bacteriol.">
        <title>The genome of Thermosipho africanus TCF52B: lateral genetic connections to the Firmicutes and Archaea.</title>
        <authorList>
            <person name="Nesboe C.L."/>
            <person name="Bapteste E."/>
            <person name="Curtis B."/>
            <person name="Dahle H."/>
            <person name="Lopez P."/>
            <person name="Macleod D."/>
            <person name="Dlutek M."/>
            <person name="Bowman S."/>
            <person name="Zhaxybayeva O."/>
            <person name="Birkeland N.-K."/>
            <person name="Doolittle W.F."/>
        </authorList>
    </citation>
    <scope>NUCLEOTIDE SEQUENCE [LARGE SCALE GENOMIC DNA]</scope>
    <source>
        <strain>TCF52B</strain>
    </source>
</reference>
<proteinExistence type="inferred from homology"/>
<keyword id="KW-1185">Reference proteome</keyword>
<keyword id="KW-0687">Ribonucleoprotein</keyword>
<keyword id="KW-0689">Ribosomal protein</keyword>
<keyword id="KW-0694">RNA-binding</keyword>
<keyword id="KW-0699">rRNA-binding</keyword>
<comment type="function">
    <text evidence="1">One of the primary rRNA binding proteins. Required for association of the 30S and 50S subunits to form the 70S ribosome, for tRNA binding and peptide bond formation. It has been suggested to have peptidyltransferase activity; this is somewhat controversial. Makes several contacts with the 16S rRNA in the 70S ribosome.</text>
</comment>
<comment type="subunit">
    <text evidence="1">Part of the 50S ribosomal subunit. Forms a bridge to the 30S subunit in the 70S ribosome.</text>
</comment>
<comment type="similarity">
    <text evidence="1">Belongs to the universal ribosomal protein uL2 family.</text>
</comment>
<gene>
    <name evidence="1" type="primary">rplB</name>
    <name type="ordered locus">THA_1218</name>
</gene>
<sequence length="274" mass="30195">MGLRRFKPTSPARRQMIIPDFSEITKKEPEKSLIAPLKKTGGRNSYGRVTVRFRGGGHKRRYRIIDFKRDKVGIPARVVSIEYDPNRTARIALLVYADGEKRYILAPQGLNVGDTVLNGPDAEIKPGNALPLENIPVGTIVHNVEFIPGKGGQIARSAGTSCQLMAKEGKYALLRMPSGELRKVPVKCYATIGVVGNEDHKNEVDGKAGRVRWKGRKPHVRGVAMNPVDHPHGGGEGRGKGHHPQSPWGQLAKGYKTRRGKKASDKLIVRRRNG</sequence>